<name>PX12A_XENLA</name>
<evidence type="ECO:0000250" key="1">
    <source>
        <dbReference type="UniProtKB" id="G2Q5N0"/>
    </source>
</evidence>
<evidence type="ECO:0000250" key="2">
    <source>
        <dbReference type="UniProtKB" id="O00623"/>
    </source>
</evidence>
<evidence type="ECO:0000250" key="3">
    <source>
        <dbReference type="UniProtKB" id="Q04370"/>
    </source>
</evidence>
<evidence type="ECO:0000255" key="4"/>
<evidence type="ECO:0000269" key="5">
    <source>
    </source>
</evidence>
<evidence type="ECO:0000305" key="6"/>
<evidence type="ECO:0000312" key="7">
    <source>
        <dbReference type="Xenbase" id="XB-GENE-17341625"/>
    </source>
</evidence>
<sequence>MAERGAHITTTSASDDRPSIFEVVAQESLMAAARPALHHIVKVLAESNPSRYGTLWRWFDELYTLLDWLLQQHYLSWASASFSENFYGLKRITLGKEVGQRNLPRKEYWKSLLLLVLIPYLRVKLEKIVNRLREEQDYSIQNPTSFHKRCYKAILASYPFVKLGWEAWFLFYQLRYILWNGKNHSPLLRLAGVQLTRLTMEDLHAMEKQEEMTNTLSNAVSLSQRIRSILKKALGAVALSVSSSLSLGVFFLQFLDWWYSAENQETLKSLNNLPVPPPPIHFELETYSPLLPKLKTVCPLCRKVRVNDTALGTSGYVFCYRCAYYYVKTHQRCPVSGYPTELQHLIKLYTPDG</sequence>
<accession>A0A1L8H814</accession>
<organism>
    <name type="scientific">Xenopus laevis</name>
    <name type="common">African clawed frog</name>
    <dbReference type="NCBI Taxonomy" id="8355"/>
    <lineage>
        <taxon>Eukaryota</taxon>
        <taxon>Metazoa</taxon>
        <taxon>Chordata</taxon>
        <taxon>Craniata</taxon>
        <taxon>Vertebrata</taxon>
        <taxon>Euteleostomi</taxon>
        <taxon>Amphibia</taxon>
        <taxon>Batrachia</taxon>
        <taxon>Anura</taxon>
        <taxon>Pipoidea</taxon>
        <taxon>Pipidae</taxon>
        <taxon>Xenopodinae</taxon>
        <taxon>Xenopus</taxon>
        <taxon>Xenopus</taxon>
    </lineage>
</organism>
<proteinExistence type="inferred from homology"/>
<dbReference type="RefSeq" id="XP_018105114.1">
    <property type="nucleotide sequence ID" value="XM_018249625.2"/>
</dbReference>
<dbReference type="RefSeq" id="XP_018105116.1">
    <property type="nucleotide sequence ID" value="XM_018249627.2"/>
</dbReference>
<dbReference type="SMR" id="A0A1L8H814"/>
<dbReference type="STRING" id="8355.A0A1L8H814"/>
<dbReference type="PaxDb" id="8355-A0A1L8H814"/>
<dbReference type="GeneID" id="108709617"/>
<dbReference type="KEGG" id="xla:108709617"/>
<dbReference type="AGR" id="Xenbase:XB-GENE-17341625"/>
<dbReference type="CTD" id="108709617"/>
<dbReference type="Xenbase" id="XB-GENE-17341625">
    <property type="gene designation" value="pex12.S"/>
</dbReference>
<dbReference type="OMA" id="QHYLARC"/>
<dbReference type="OrthoDB" id="107372at2759"/>
<dbReference type="UniPathway" id="UPA00143"/>
<dbReference type="Proteomes" id="UP000186698">
    <property type="component" value="Chromosome 2S"/>
</dbReference>
<dbReference type="Bgee" id="108709617">
    <property type="expression patterns" value="Expressed in blastula and 19 other cell types or tissues"/>
</dbReference>
<dbReference type="GO" id="GO:1990429">
    <property type="term" value="C:peroxisomal importomer complex"/>
    <property type="evidence" value="ECO:0000318"/>
    <property type="project" value="GO_Central"/>
</dbReference>
<dbReference type="GO" id="GO:0005778">
    <property type="term" value="C:peroxisomal membrane"/>
    <property type="evidence" value="ECO:0000318"/>
    <property type="project" value="GO_Central"/>
</dbReference>
<dbReference type="GO" id="GO:0004842">
    <property type="term" value="F:ubiquitin-protein transferase activity"/>
    <property type="evidence" value="ECO:0000318"/>
    <property type="project" value="GO_Central"/>
</dbReference>
<dbReference type="GO" id="GO:0008270">
    <property type="term" value="F:zinc ion binding"/>
    <property type="evidence" value="ECO:0007669"/>
    <property type="project" value="UniProtKB-KW"/>
</dbReference>
<dbReference type="GO" id="GO:0016558">
    <property type="term" value="P:protein import into peroxisome matrix"/>
    <property type="evidence" value="ECO:0000318"/>
    <property type="project" value="GO_Central"/>
</dbReference>
<dbReference type="GO" id="GO:0006513">
    <property type="term" value="P:protein monoubiquitination"/>
    <property type="evidence" value="ECO:0000318"/>
    <property type="project" value="GO_Central"/>
</dbReference>
<dbReference type="CDD" id="cd16451">
    <property type="entry name" value="mRING_PEX12"/>
    <property type="match status" value="1"/>
</dbReference>
<dbReference type="FunFam" id="3.30.40.10:FF:000266">
    <property type="entry name" value="Peroxisome assembly protein 12"/>
    <property type="match status" value="1"/>
</dbReference>
<dbReference type="InterPro" id="IPR017375">
    <property type="entry name" value="PEX12"/>
</dbReference>
<dbReference type="InterPro" id="IPR006845">
    <property type="entry name" value="Pex_N"/>
</dbReference>
<dbReference type="PANTHER" id="PTHR12888:SF0">
    <property type="entry name" value="PEROXISOME ASSEMBLY PROTEIN 12"/>
    <property type="match status" value="1"/>
</dbReference>
<dbReference type="PANTHER" id="PTHR12888">
    <property type="entry name" value="PEROXISOME ASSEMBLY PROTEIN 12 PEROXIN-12"/>
    <property type="match status" value="1"/>
</dbReference>
<dbReference type="Pfam" id="PF04757">
    <property type="entry name" value="Pex2_Pex12"/>
    <property type="match status" value="1"/>
</dbReference>
<dbReference type="PIRSF" id="PIRSF038074">
    <property type="entry name" value="Peroxisome_assembly_p12"/>
    <property type="match status" value="1"/>
</dbReference>
<dbReference type="SUPFAM" id="SSF57850">
    <property type="entry name" value="RING/U-box"/>
    <property type="match status" value="1"/>
</dbReference>
<comment type="function">
    <text evidence="2 3 5">Component of a retrotranslocation channel required for peroxisome organization by mediating export of the PEX5 receptor from peroxisomes to the cytosol, thereby promoting PEX5 recycling (PubMed:35931083). The retrotranslocation channel is composed of PEX2, PEX10 and PEX12; each subunit contributing transmembrane segments that coassemble into an open channel that specifically allows the passage of PEX5 through the peroxisomal membrane (By similarity). PEX12 also regulates PEX5 recycling by activating the E3 ubiquitin-protein ligase activity of PEX10 (By similarity). When PEX5 recycling is compromised, PEX12 stimulates PEX10-mediated polyubiquitination of PEX5, leading to its subsequent degradation (By similarity).</text>
</comment>
<comment type="pathway">
    <text evidence="2">Protein modification; protein ubiquitination.</text>
</comment>
<comment type="subunit">
    <text evidence="2">Component of the PEX2-PEX10-PEX12 retrotranslocation channel.</text>
</comment>
<comment type="subcellular location">
    <subcellularLocation>
        <location evidence="2">Peroxisome membrane</location>
        <topology evidence="4">Multi-pass membrane protein</topology>
    </subcellularLocation>
</comment>
<comment type="domain">
    <text evidence="1">The three subunits of the retrotranslocation channel (PEX2, PEX10 and PEX12) coassemble in the membrane into a channel with an open 10 Angstrom pore. The RING-type zinc-fingers that catalyze PEX5 receptor ubiquitination are positioned above the pore on the cytosolic side of the complex.</text>
</comment>
<comment type="domain">
    <text evidence="3">The RING-type zinc-finger is degenerated and only coordinates one zinc ions, preventing E3 ubiquitin-protein ligase activity.</text>
</comment>
<comment type="similarity">
    <text evidence="6">Belongs to the pex2/pex10/pex12 family.</text>
</comment>
<feature type="chain" id="PRO_0000456989" description="Peroxisome assembly protein 12-A">
    <location>
        <begin position="1"/>
        <end position="353"/>
    </location>
</feature>
<feature type="topological domain" description="Peroxisomal matrix" evidence="1">
    <location>
        <begin position="1"/>
        <end position="19"/>
    </location>
</feature>
<feature type="transmembrane region" description="Helical; Name=TM1" evidence="1">
    <location>
        <begin position="20"/>
        <end position="47"/>
    </location>
</feature>
<feature type="topological domain" description="Cytoplasmic" evidence="1">
    <location>
        <begin position="48"/>
        <end position="51"/>
    </location>
</feature>
<feature type="transmembrane region" description="Helical; Name=TM2" evidence="1">
    <location>
        <begin position="52"/>
        <end position="76"/>
    </location>
</feature>
<feature type="topological domain" description="Peroxisomal matrix" evidence="1">
    <location>
        <begin position="77"/>
        <end position="104"/>
    </location>
</feature>
<feature type="transmembrane region" description="Helical; Name=TM3" evidence="1">
    <location>
        <begin position="105"/>
        <end position="134"/>
    </location>
</feature>
<feature type="topological domain" description="Cytoplasmic" evidence="1">
    <location>
        <begin position="135"/>
        <end position="139"/>
    </location>
</feature>
<feature type="transmembrane region" description="Helical; Name=TM4" evidence="1">
    <location>
        <begin position="140"/>
        <end position="178"/>
    </location>
</feature>
<feature type="topological domain" description="Peroxisomal matrix" evidence="1">
    <location>
        <begin position="179"/>
        <end position="243"/>
    </location>
</feature>
<feature type="transmembrane region" description="Helical; Name=TM5" evidence="1">
    <location>
        <begin position="244"/>
        <end position="271"/>
    </location>
</feature>
<feature type="topological domain" description="Cytoplasmic" evidence="1">
    <location>
        <begin position="272"/>
        <end position="353"/>
    </location>
</feature>
<feature type="zinc finger region" description="RING-type; degenerate" evidence="2">
    <location>
        <begin position="298"/>
        <end position="337"/>
    </location>
</feature>
<feature type="binding site" evidence="1">
    <location>
        <position position="298"/>
    </location>
    <ligand>
        <name>Zn(2+)</name>
        <dbReference type="ChEBI" id="CHEBI:29105"/>
    </ligand>
</feature>
<feature type="binding site" evidence="1">
    <location>
        <position position="301"/>
    </location>
    <ligand>
        <name>Zn(2+)</name>
        <dbReference type="ChEBI" id="CHEBI:29105"/>
    </ligand>
</feature>
<feature type="binding site" evidence="1">
    <location>
        <position position="319"/>
    </location>
    <ligand>
        <name>Zn(2+)</name>
        <dbReference type="ChEBI" id="CHEBI:29105"/>
    </ligand>
</feature>
<feature type="binding site" evidence="1">
    <location>
        <position position="322"/>
    </location>
    <ligand>
        <name>Zn(2+)</name>
        <dbReference type="ChEBI" id="CHEBI:29105"/>
    </ligand>
</feature>
<protein>
    <recommendedName>
        <fullName evidence="6">Peroxisome assembly protein 12-A</fullName>
    </recommendedName>
    <alternativeName>
        <fullName evidence="6">Peroxin-12-A</fullName>
    </alternativeName>
</protein>
<gene>
    <name evidence="7" type="primary">pex12.S</name>
</gene>
<reference key="1">
    <citation type="journal article" date="2016" name="Nature">
        <title>Genome evolution in the allotetraploid frog Xenopus laevis.</title>
        <authorList>
            <person name="Session A.M."/>
            <person name="Uno Y."/>
            <person name="Kwon T."/>
            <person name="Chapman J.A."/>
            <person name="Toyoda A."/>
            <person name="Takahashi S."/>
            <person name="Fukui A."/>
            <person name="Hikosaka A."/>
            <person name="Suzuki A."/>
            <person name="Kondo M."/>
            <person name="van Heeringen S.J."/>
            <person name="Quigley I."/>
            <person name="Heinz S."/>
            <person name="Ogino H."/>
            <person name="Ochi H."/>
            <person name="Hellsten U."/>
            <person name="Lyons J.B."/>
            <person name="Simakov O."/>
            <person name="Putnam N."/>
            <person name="Stites J."/>
            <person name="Kuroki Y."/>
            <person name="Tanaka T."/>
            <person name="Michiue T."/>
            <person name="Watanabe M."/>
            <person name="Bogdanovic O."/>
            <person name="Lister R."/>
            <person name="Georgiou G."/>
            <person name="Paranjpe S.S."/>
            <person name="van Kruijsbergen I."/>
            <person name="Shu S."/>
            <person name="Carlson J."/>
            <person name="Kinoshita T."/>
            <person name="Ohta Y."/>
            <person name="Mawaribuchi S."/>
            <person name="Jenkins J."/>
            <person name="Grimwood J."/>
            <person name="Schmutz J."/>
            <person name="Mitros T."/>
            <person name="Mozaffari S.V."/>
            <person name="Suzuki Y."/>
            <person name="Haramoto Y."/>
            <person name="Yamamoto T.S."/>
            <person name="Takagi C."/>
            <person name="Heald R."/>
            <person name="Miller K."/>
            <person name="Haudenschild C."/>
            <person name="Kitzman J."/>
            <person name="Nakayama T."/>
            <person name="Izutsu Y."/>
            <person name="Robert J."/>
            <person name="Fortriede J."/>
            <person name="Burns K."/>
            <person name="Lotay V."/>
            <person name="Karimi K."/>
            <person name="Yasuoka Y."/>
            <person name="Dichmann D.S."/>
            <person name="Flajnik M.F."/>
            <person name="Houston D.W."/>
            <person name="Shendure J."/>
            <person name="DuPasquier L."/>
            <person name="Vize P.D."/>
            <person name="Zorn A.M."/>
            <person name="Ito M."/>
            <person name="Marcotte E.M."/>
            <person name="Wallingford J.B."/>
            <person name="Ito Y."/>
            <person name="Asashima M."/>
            <person name="Ueno N."/>
            <person name="Matsuda Y."/>
            <person name="Veenstra G.J."/>
            <person name="Fujiyama A."/>
            <person name="Harland R.M."/>
            <person name="Taira M."/>
            <person name="Rokhsar D.S."/>
        </authorList>
    </citation>
    <scope>NUCLEOTIDE SEQUENCE [LARGE SCALE GENOMIC DNA]</scope>
    <source>
        <strain>J</strain>
    </source>
</reference>
<reference key="2">
    <citation type="journal article" date="2022" name="Mol. Cell">
        <title>PEX5 translocation into and out of peroxisomes drives matrix protein import.</title>
        <authorList>
            <person name="Skowyra M.L."/>
            <person name="Rapoport T.A."/>
        </authorList>
    </citation>
    <scope>FUNCTION</scope>
</reference>
<keyword id="KW-0472">Membrane</keyword>
<keyword id="KW-0479">Metal-binding</keyword>
<keyword id="KW-0576">Peroxisome</keyword>
<keyword id="KW-0653">Protein transport</keyword>
<keyword id="KW-1185">Reference proteome</keyword>
<keyword id="KW-0812">Transmembrane</keyword>
<keyword id="KW-1133">Transmembrane helix</keyword>
<keyword id="KW-0813">Transport</keyword>
<keyword id="KW-0833">Ubl conjugation pathway</keyword>
<keyword id="KW-0862">Zinc</keyword>
<keyword id="KW-0863">Zinc-finger</keyword>